<accession>Q9X1K8</accession>
<dbReference type="EC" id="1.17.1.8" evidence="1"/>
<dbReference type="EMBL" id="AE000512">
    <property type="protein sequence ID" value="AAD36587.1"/>
    <property type="molecule type" value="Genomic_DNA"/>
</dbReference>
<dbReference type="PIR" id="A72246">
    <property type="entry name" value="A72246"/>
</dbReference>
<dbReference type="RefSeq" id="NP_229320.1">
    <property type="nucleotide sequence ID" value="NC_000853.1"/>
</dbReference>
<dbReference type="RefSeq" id="WP_004081877.1">
    <property type="nucleotide sequence ID" value="NC_000853.1"/>
</dbReference>
<dbReference type="PDB" id="1VM6">
    <property type="method" value="X-ray"/>
    <property type="resolution" value="2.27 A"/>
    <property type="chains" value="A/B/C/D=1-216"/>
</dbReference>
<dbReference type="PDBsum" id="1VM6"/>
<dbReference type="SMR" id="Q9X1K8"/>
<dbReference type="FunCoup" id="Q9X1K8">
    <property type="interactions" value="413"/>
</dbReference>
<dbReference type="STRING" id="243274.TM_1520"/>
<dbReference type="PaxDb" id="243274-THEMA_06700"/>
<dbReference type="EnsemblBacteria" id="AAD36587">
    <property type="protein sequence ID" value="AAD36587"/>
    <property type="gene ID" value="TM_1520"/>
</dbReference>
<dbReference type="KEGG" id="tma:TM1520"/>
<dbReference type="KEGG" id="tmi:THEMA_06700"/>
<dbReference type="KEGG" id="tmm:Tmari_1528"/>
<dbReference type="KEGG" id="tmw:THMA_1552"/>
<dbReference type="eggNOG" id="COG0289">
    <property type="taxonomic scope" value="Bacteria"/>
</dbReference>
<dbReference type="InParanoid" id="Q9X1K8"/>
<dbReference type="OrthoDB" id="9790352at2"/>
<dbReference type="BRENDA" id="1.17.1.8">
    <property type="organism ID" value="6331"/>
</dbReference>
<dbReference type="UniPathway" id="UPA00034">
    <property type="reaction ID" value="UER00018"/>
</dbReference>
<dbReference type="EvolutionaryTrace" id="Q9X1K8"/>
<dbReference type="Proteomes" id="UP000008183">
    <property type="component" value="Chromosome"/>
</dbReference>
<dbReference type="GO" id="GO:0005829">
    <property type="term" value="C:cytosol"/>
    <property type="evidence" value="ECO:0000318"/>
    <property type="project" value="GO_Central"/>
</dbReference>
<dbReference type="GO" id="GO:0008839">
    <property type="term" value="F:4-hydroxy-tetrahydrodipicolinate reductase"/>
    <property type="evidence" value="ECO:0000318"/>
    <property type="project" value="GO_Central"/>
</dbReference>
<dbReference type="GO" id="GO:0051287">
    <property type="term" value="F:NAD binding"/>
    <property type="evidence" value="ECO:0007669"/>
    <property type="project" value="UniProtKB-UniRule"/>
</dbReference>
<dbReference type="GO" id="GO:0050661">
    <property type="term" value="F:NADP binding"/>
    <property type="evidence" value="ECO:0007669"/>
    <property type="project" value="UniProtKB-UniRule"/>
</dbReference>
<dbReference type="GO" id="GO:0016726">
    <property type="term" value="F:oxidoreductase activity, acting on CH or CH2 groups, NAD or NADP as acceptor"/>
    <property type="evidence" value="ECO:0007669"/>
    <property type="project" value="UniProtKB-UniRule"/>
</dbReference>
<dbReference type="GO" id="GO:0019877">
    <property type="term" value="P:diaminopimelate biosynthetic process"/>
    <property type="evidence" value="ECO:0000318"/>
    <property type="project" value="GO_Central"/>
</dbReference>
<dbReference type="GO" id="GO:0009089">
    <property type="term" value="P:lysine biosynthetic process via diaminopimelate"/>
    <property type="evidence" value="ECO:0007669"/>
    <property type="project" value="UniProtKB-UniRule"/>
</dbReference>
<dbReference type="CDD" id="cd02274">
    <property type="entry name" value="DHDPR_N"/>
    <property type="match status" value="1"/>
</dbReference>
<dbReference type="Gene3D" id="3.30.360.10">
    <property type="entry name" value="Dihydrodipicolinate Reductase, domain 2"/>
    <property type="match status" value="1"/>
</dbReference>
<dbReference type="Gene3D" id="3.40.50.720">
    <property type="entry name" value="NAD(P)-binding Rossmann-like Domain"/>
    <property type="match status" value="2"/>
</dbReference>
<dbReference type="HAMAP" id="MF_00102">
    <property type="entry name" value="DapB"/>
    <property type="match status" value="1"/>
</dbReference>
<dbReference type="InterPro" id="IPR022663">
    <property type="entry name" value="DapB_C"/>
</dbReference>
<dbReference type="InterPro" id="IPR000846">
    <property type="entry name" value="DapB_N"/>
</dbReference>
<dbReference type="InterPro" id="IPR022664">
    <property type="entry name" value="DapB_N_CS"/>
</dbReference>
<dbReference type="InterPro" id="IPR023940">
    <property type="entry name" value="DHDPR_bac"/>
</dbReference>
<dbReference type="InterPro" id="IPR036291">
    <property type="entry name" value="NAD(P)-bd_dom_sf"/>
</dbReference>
<dbReference type="PANTHER" id="PTHR20836:SF0">
    <property type="entry name" value="4-HYDROXY-TETRAHYDRODIPICOLINATE REDUCTASE 1, CHLOROPLASTIC-RELATED"/>
    <property type="match status" value="1"/>
</dbReference>
<dbReference type="PANTHER" id="PTHR20836">
    <property type="entry name" value="DIHYDRODIPICOLINATE REDUCTASE"/>
    <property type="match status" value="1"/>
</dbReference>
<dbReference type="Pfam" id="PF05173">
    <property type="entry name" value="DapB_C"/>
    <property type="match status" value="1"/>
</dbReference>
<dbReference type="Pfam" id="PF01113">
    <property type="entry name" value="DapB_N"/>
    <property type="match status" value="1"/>
</dbReference>
<dbReference type="PIRSF" id="PIRSF000161">
    <property type="entry name" value="DHPR"/>
    <property type="match status" value="1"/>
</dbReference>
<dbReference type="SUPFAM" id="SSF55347">
    <property type="entry name" value="Glyceraldehyde-3-phosphate dehydrogenase-like, C-terminal domain"/>
    <property type="match status" value="1"/>
</dbReference>
<dbReference type="SUPFAM" id="SSF51735">
    <property type="entry name" value="NAD(P)-binding Rossmann-fold domains"/>
    <property type="match status" value="1"/>
</dbReference>
<dbReference type="PROSITE" id="PS01298">
    <property type="entry name" value="DAPB"/>
    <property type="match status" value="1"/>
</dbReference>
<feature type="chain" id="PRO_0000141502" description="4-hydroxy-tetrahydrodipicolinate reductase">
    <location>
        <begin position="1"/>
        <end position="216"/>
    </location>
</feature>
<feature type="active site" description="Proton donor/acceptor" evidence="1">
    <location>
        <position position="127"/>
    </location>
</feature>
<feature type="active site" description="Proton donor" evidence="3">
    <location>
        <position position="131"/>
    </location>
</feature>
<feature type="binding site" evidence="2 5">
    <location>
        <begin position="9"/>
        <end position="12"/>
    </location>
    <ligand>
        <name>NAD(+)</name>
        <dbReference type="ChEBI" id="CHEBI:57540"/>
    </ligand>
</feature>
<feature type="binding site" evidence="2 5">
    <location>
        <begin position="71"/>
        <end position="73"/>
    </location>
    <ligand>
        <name>NAD(+)</name>
        <dbReference type="ChEBI" id="CHEBI:57540"/>
    </ligand>
</feature>
<feature type="binding site" evidence="2 5">
    <location>
        <begin position="95"/>
        <end position="98"/>
    </location>
    <ligand>
        <name>NAD(+)</name>
        <dbReference type="ChEBI" id="CHEBI:57540"/>
    </ligand>
</feature>
<feature type="binding site" evidence="1">
    <location>
        <position position="128"/>
    </location>
    <ligand>
        <name>(S)-2,3,4,5-tetrahydrodipicolinate</name>
        <dbReference type="ChEBI" id="CHEBI:16845"/>
    </ligand>
</feature>
<feature type="binding site" evidence="2 5">
    <location>
        <position position="131"/>
    </location>
    <ligand>
        <name>NAD(+)</name>
        <dbReference type="ChEBI" id="CHEBI:57540"/>
    </ligand>
</feature>
<feature type="binding site" evidence="1">
    <location>
        <begin position="137"/>
        <end position="138"/>
    </location>
    <ligand>
        <name>(S)-2,3,4,5-tetrahydrodipicolinate</name>
        <dbReference type="ChEBI" id="CHEBI:16845"/>
    </ligand>
</feature>
<feature type="strand" evidence="6">
    <location>
        <begin position="2"/>
        <end position="6"/>
    </location>
</feature>
<feature type="turn" evidence="6">
    <location>
        <begin position="7"/>
        <end position="9"/>
    </location>
</feature>
<feature type="helix" evidence="6">
    <location>
        <begin position="11"/>
        <end position="22"/>
    </location>
</feature>
<feature type="strand" evidence="6">
    <location>
        <begin position="26"/>
        <end position="32"/>
    </location>
</feature>
<feature type="strand" evidence="6">
    <location>
        <begin position="35"/>
        <end position="38"/>
    </location>
</feature>
<feature type="strand" evidence="6">
    <location>
        <begin position="43"/>
        <end position="47"/>
    </location>
</feature>
<feature type="helix" evidence="6">
    <location>
        <begin position="51"/>
        <end position="53"/>
    </location>
</feature>
<feature type="helix" evidence="6">
    <location>
        <begin position="54"/>
        <end position="64"/>
    </location>
</feature>
<feature type="strand" evidence="6">
    <location>
        <begin position="67"/>
        <end position="70"/>
    </location>
</feature>
<feature type="helix" evidence="6">
    <location>
        <begin position="77"/>
        <end position="86"/>
    </location>
</feature>
<feature type="turn" evidence="6">
    <location>
        <begin position="87"/>
        <end position="89"/>
    </location>
</feature>
<feature type="strand" evidence="6">
    <location>
        <begin position="90"/>
        <end position="94"/>
    </location>
</feature>
<feature type="helix" evidence="6">
    <location>
        <begin position="100"/>
        <end position="115"/>
    </location>
</feature>
<feature type="turn" evidence="6">
    <location>
        <begin position="116"/>
        <end position="118"/>
    </location>
</feature>
<feature type="strand" evidence="6">
    <location>
        <begin position="119"/>
        <end position="127"/>
    </location>
</feature>
<feature type="helix" evidence="6">
    <location>
        <begin position="137"/>
        <end position="145"/>
    </location>
</feature>
<feature type="strand" evidence="6">
    <location>
        <begin position="152"/>
        <end position="156"/>
    </location>
</feature>
<feature type="strand" evidence="6">
    <location>
        <begin position="163"/>
        <end position="169"/>
    </location>
</feature>
<feature type="strand" evidence="6">
    <location>
        <begin position="171"/>
        <end position="181"/>
    </location>
</feature>
<feature type="helix" evidence="6">
    <location>
        <begin position="185"/>
        <end position="198"/>
    </location>
</feature>
<feature type="strand" evidence="6">
    <location>
        <begin position="203"/>
        <end position="206"/>
    </location>
</feature>
<feature type="helix" evidence="6">
    <location>
        <begin position="208"/>
        <end position="212"/>
    </location>
</feature>
<keyword id="KW-0002">3D-structure</keyword>
<keyword id="KW-0028">Amino-acid biosynthesis</keyword>
<keyword id="KW-0963">Cytoplasm</keyword>
<keyword id="KW-0220">Diaminopimelate biosynthesis</keyword>
<keyword id="KW-0457">Lysine biosynthesis</keyword>
<keyword id="KW-0520">NAD</keyword>
<keyword id="KW-0521">NADP</keyword>
<keyword id="KW-0560">Oxidoreductase</keyword>
<keyword id="KW-1185">Reference proteome</keyword>
<sequence length="216" mass="23731">MKYGIVGYSGRMGQEIQKVFSEKGHELVLKVDVNGVEELDSPDVVIDFSSPEALPKTVDLCKKYRAGLVLGTTALKEEHLQMLRELSKEVPVVQAYNFSIGINVLKRFLSELVKVLEDWDVEIVETHHRFKKDAPSGTAILLESALGKSVPIHSLRVGGVPGDHVVVFGNIGETIEIKHRAISRTVFAIGALKAAEFLVGKDPGMYSFEEVIFGGE</sequence>
<name>DAPB_THEMA</name>
<protein>
    <recommendedName>
        <fullName evidence="1">4-hydroxy-tetrahydrodipicolinate reductase</fullName>
        <shortName evidence="1">HTPA reductase</shortName>
        <ecNumber evidence="1">1.17.1.8</ecNumber>
    </recommendedName>
</protein>
<proteinExistence type="evidence at protein level"/>
<evidence type="ECO:0000255" key="1">
    <source>
        <dbReference type="HAMAP-Rule" id="MF_00102"/>
    </source>
</evidence>
<evidence type="ECO:0000269" key="2">
    <source>
    </source>
</evidence>
<evidence type="ECO:0000305" key="3"/>
<evidence type="ECO:0000305" key="4">
    <source>
    </source>
</evidence>
<evidence type="ECO:0007744" key="5">
    <source>
        <dbReference type="PDB" id="1VM6"/>
    </source>
</evidence>
<evidence type="ECO:0007829" key="6">
    <source>
        <dbReference type="PDB" id="1VM6"/>
    </source>
</evidence>
<reference key="1">
    <citation type="journal article" date="1999" name="Nature">
        <title>Evidence for lateral gene transfer between Archaea and Bacteria from genome sequence of Thermotoga maritima.</title>
        <authorList>
            <person name="Nelson K.E."/>
            <person name="Clayton R.A."/>
            <person name="Gill S.R."/>
            <person name="Gwinn M.L."/>
            <person name="Dodson R.J."/>
            <person name="Haft D.H."/>
            <person name="Hickey E.K."/>
            <person name="Peterson J.D."/>
            <person name="Nelson W.C."/>
            <person name="Ketchum K.A."/>
            <person name="McDonald L.A."/>
            <person name="Utterback T.R."/>
            <person name="Malek J.A."/>
            <person name="Linher K.D."/>
            <person name="Garrett M.M."/>
            <person name="Stewart A.M."/>
            <person name="Cotton M.D."/>
            <person name="Pratt M.S."/>
            <person name="Phillips C.A."/>
            <person name="Richardson D.L."/>
            <person name="Heidelberg J.F."/>
            <person name="Sutton G.G."/>
            <person name="Fleischmann R.D."/>
            <person name="Eisen J.A."/>
            <person name="White O."/>
            <person name="Salzberg S.L."/>
            <person name="Smith H.O."/>
            <person name="Venter J.C."/>
            <person name="Fraser C.M."/>
        </authorList>
    </citation>
    <scope>NUCLEOTIDE SEQUENCE [LARGE SCALE GENOMIC DNA]</scope>
    <source>
        <strain>ATCC 43589 / DSM 3109 / JCM 10099 / NBRC 100826 / MSB8</strain>
    </source>
</reference>
<reference key="2">
    <citation type="journal article" date="2008" name="J. Biochem.">
        <title>Characterization of dihydrodipicolinate reductase from Thermotoga maritima reveals evolution of substrate binding kinetics.</title>
        <authorList>
            <person name="Pearce F.G."/>
            <person name="Sprissler C."/>
            <person name="Gerrard J.A."/>
        </authorList>
    </citation>
    <scope>X-RAY CRYSTALLOGRAPHY (2.27 ANGSTROMS) IN COMPLEX WITH NADH</scope>
    <scope>FUNCTION</scope>
    <scope>BIOPHYSICOCHEMICAL PROPERTIES</scope>
    <scope>SUBSTRATE SPECIFICITY</scope>
    <scope>ACTIVITY REGULATION</scope>
    <scope>SUBUNIT</scope>
    <source>
        <strain>ATCC 43589 / DSM 3109 / JCM 10099 / NBRC 100826 / MSB8</strain>
    </source>
</reference>
<comment type="function">
    <text evidence="1 2 3">Catalyzes the conversion of 4-hydroxy-tetrahydrodipicolinate (HTPA) to tetrahydrodipicolinate (Probable). Uses NADPH as a reductant with much more efficiency than NADH.</text>
</comment>
<comment type="catalytic activity">
    <reaction evidence="1">
        <text>(S)-2,3,4,5-tetrahydrodipicolinate + NAD(+) + H2O = (2S,4S)-4-hydroxy-2,3,4,5-tetrahydrodipicolinate + NADH + H(+)</text>
        <dbReference type="Rhea" id="RHEA:35323"/>
        <dbReference type="ChEBI" id="CHEBI:15377"/>
        <dbReference type="ChEBI" id="CHEBI:15378"/>
        <dbReference type="ChEBI" id="CHEBI:16845"/>
        <dbReference type="ChEBI" id="CHEBI:57540"/>
        <dbReference type="ChEBI" id="CHEBI:57945"/>
        <dbReference type="ChEBI" id="CHEBI:67139"/>
        <dbReference type="EC" id="1.17.1.8"/>
    </reaction>
</comment>
<comment type="catalytic activity">
    <reaction evidence="1">
        <text>(S)-2,3,4,5-tetrahydrodipicolinate + NADP(+) + H2O = (2S,4S)-4-hydroxy-2,3,4,5-tetrahydrodipicolinate + NADPH + H(+)</text>
        <dbReference type="Rhea" id="RHEA:35331"/>
        <dbReference type="ChEBI" id="CHEBI:15377"/>
        <dbReference type="ChEBI" id="CHEBI:15378"/>
        <dbReference type="ChEBI" id="CHEBI:16845"/>
        <dbReference type="ChEBI" id="CHEBI:57783"/>
        <dbReference type="ChEBI" id="CHEBI:58349"/>
        <dbReference type="ChEBI" id="CHEBI:67139"/>
        <dbReference type="EC" id="1.17.1.8"/>
    </reaction>
</comment>
<comment type="activity regulation">
    <text evidence="2">Is inhibited by high concentrations of NADH.</text>
</comment>
<comment type="biophysicochemical properties">
    <kinetics>
        <KM evidence="2">2.5 uM for NADH (at 30 degrees Celsius)</KM>
        <KM evidence="2">0.6 uM for NADPH (at 30 degrees Celsius)</KM>
        <KM evidence="2">1.8 uM for NADH (at 45 degrees Celsius)</KM>
        <KM evidence="2">2.1 uM for NADPH (at 45 degrees Celsius)</KM>
    </kinetics>
    <temperatureDependence>
        <text evidence="2">Is stable for up to 48 hours at 80 degrees Celsius. Has a thermal denaturation midpoint (Tm) of 95.7 degrees Celsius.</text>
    </temperatureDependence>
</comment>
<comment type="pathway">
    <text evidence="1">Amino-acid biosynthesis; L-lysine biosynthesis via DAP pathway; (S)-tetrahydrodipicolinate from L-aspartate: step 4/4.</text>
</comment>
<comment type="subunit">
    <text evidence="4">Homotetramer.</text>
</comment>
<comment type="subcellular location">
    <subcellularLocation>
        <location evidence="1">Cytoplasm</location>
    </subcellularLocation>
</comment>
<comment type="similarity">
    <text evidence="1">Belongs to the DapB family.</text>
</comment>
<comment type="caution">
    <text evidence="3">Was originally thought to be a dihydrodipicolinate reductase (DHDPR), catalyzing the conversion of dihydrodipicolinate to tetrahydrodipicolinate. However, it was shown in E.coli that the substrate of the enzymatic reaction is not dihydrodipicolinate (DHDP) but in fact (2S,4S)-4-hydroxy-2,3,4,5-tetrahydrodipicolinic acid (HTPA), the product released by the DapA-catalyzed reaction.</text>
</comment>
<organism>
    <name type="scientific">Thermotoga maritima (strain ATCC 43589 / DSM 3109 / JCM 10099 / NBRC 100826 / MSB8)</name>
    <dbReference type="NCBI Taxonomy" id="243274"/>
    <lineage>
        <taxon>Bacteria</taxon>
        <taxon>Thermotogati</taxon>
        <taxon>Thermotogota</taxon>
        <taxon>Thermotogae</taxon>
        <taxon>Thermotogales</taxon>
        <taxon>Thermotogaceae</taxon>
        <taxon>Thermotoga</taxon>
    </lineage>
</organism>
<gene>
    <name evidence="1" type="primary">dapB</name>
    <name type="ordered locus">TM_1520</name>
</gene>